<name>CH60_ALCBS</name>
<dbReference type="EC" id="5.6.1.7" evidence="1"/>
<dbReference type="EMBL" id="AM286690">
    <property type="protein sequence ID" value="CAL16082.1"/>
    <property type="molecule type" value="Genomic_DNA"/>
</dbReference>
<dbReference type="RefSeq" id="WP_011587919.1">
    <property type="nucleotide sequence ID" value="NC_008260.1"/>
</dbReference>
<dbReference type="SMR" id="Q0VRW6"/>
<dbReference type="STRING" id="393595.ABO_0634"/>
<dbReference type="KEGG" id="abo:ABO_0634"/>
<dbReference type="eggNOG" id="COG0459">
    <property type="taxonomic scope" value="Bacteria"/>
</dbReference>
<dbReference type="HOGENOM" id="CLU_016503_3_0_6"/>
<dbReference type="OrthoDB" id="9766614at2"/>
<dbReference type="Proteomes" id="UP000008871">
    <property type="component" value="Chromosome"/>
</dbReference>
<dbReference type="GO" id="GO:0005737">
    <property type="term" value="C:cytoplasm"/>
    <property type="evidence" value="ECO:0007669"/>
    <property type="project" value="UniProtKB-SubCell"/>
</dbReference>
<dbReference type="GO" id="GO:0005524">
    <property type="term" value="F:ATP binding"/>
    <property type="evidence" value="ECO:0007669"/>
    <property type="project" value="UniProtKB-UniRule"/>
</dbReference>
<dbReference type="GO" id="GO:0140662">
    <property type="term" value="F:ATP-dependent protein folding chaperone"/>
    <property type="evidence" value="ECO:0007669"/>
    <property type="project" value="InterPro"/>
</dbReference>
<dbReference type="GO" id="GO:0016853">
    <property type="term" value="F:isomerase activity"/>
    <property type="evidence" value="ECO:0007669"/>
    <property type="project" value="UniProtKB-KW"/>
</dbReference>
<dbReference type="GO" id="GO:0051082">
    <property type="term" value="F:unfolded protein binding"/>
    <property type="evidence" value="ECO:0007669"/>
    <property type="project" value="UniProtKB-UniRule"/>
</dbReference>
<dbReference type="GO" id="GO:0042026">
    <property type="term" value="P:protein refolding"/>
    <property type="evidence" value="ECO:0007669"/>
    <property type="project" value="UniProtKB-UniRule"/>
</dbReference>
<dbReference type="CDD" id="cd03344">
    <property type="entry name" value="GroEL"/>
    <property type="match status" value="1"/>
</dbReference>
<dbReference type="FunFam" id="1.10.560.10:FF:000001">
    <property type="entry name" value="60 kDa chaperonin"/>
    <property type="match status" value="1"/>
</dbReference>
<dbReference type="FunFam" id="3.50.7.10:FF:000001">
    <property type="entry name" value="60 kDa chaperonin"/>
    <property type="match status" value="1"/>
</dbReference>
<dbReference type="Gene3D" id="3.50.7.10">
    <property type="entry name" value="GroEL"/>
    <property type="match status" value="1"/>
</dbReference>
<dbReference type="Gene3D" id="1.10.560.10">
    <property type="entry name" value="GroEL-like equatorial domain"/>
    <property type="match status" value="1"/>
</dbReference>
<dbReference type="Gene3D" id="3.30.260.10">
    <property type="entry name" value="TCP-1-like chaperonin intermediate domain"/>
    <property type="match status" value="1"/>
</dbReference>
<dbReference type="HAMAP" id="MF_00600">
    <property type="entry name" value="CH60"/>
    <property type="match status" value="1"/>
</dbReference>
<dbReference type="InterPro" id="IPR018370">
    <property type="entry name" value="Chaperonin_Cpn60_CS"/>
</dbReference>
<dbReference type="InterPro" id="IPR001844">
    <property type="entry name" value="Cpn60/GroEL"/>
</dbReference>
<dbReference type="InterPro" id="IPR002423">
    <property type="entry name" value="Cpn60/GroEL/TCP-1"/>
</dbReference>
<dbReference type="InterPro" id="IPR027409">
    <property type="entry name" value="GroEL-like_apical_dom_sf"/>
</dbReference>
<dbReference type="InterPro" id="IPR027413">
    <property type="entry name" value="GROEL-like_equatorial_sf"/>
</dbReference>
<dbReference type="InterPro" id="IPR027410">
    <property type="entry name" value="TCP-1-like_intermed_sf"/>
</dbReference>
<dbReference type="NCBIfam" id="TIGR02348">
    <property type="entry name" value="GroEL"/>
    <property type="match status" value="1"/>
</dbReference>
<dbReference type="NCBIfam" id="NF000592">
    <property type="entry name" value="PRK00013.1"/>
    <property type="match status" value="1"/>
</dbReference>
<dbReference type="NCBIfam" id="NF009487">
    <property type="entry name" value="PRK12849.1"/>
    <property type="match status" value="1"/>
</dbReference>
<dbReference type="NCBIfam" id="NF009488">
    <property type="entry name" value="PRK12850.1"/>
    <property type="match status" value="1"/>
</dbReference>
<dbReference type="NCBIfam" id="NF009489">
    <property type="entry name" value="PRK12851.1"/>
    <property type="match status" value="1"/>
</dbReference>
<dbReference type="PANTHER" id="PTHR45633">
    <property type="entry name" value="60 KDA HEAT SHOCK PROTEIN, MITOCHONDRIAL"/>
    <property type="match status" value="1"/>
</dbReference>
<dbReference type="Pfam" id="PF00118">
    <property type="entry name" value="Cpn60_TCP1"/>
    <property type="match status" value="1"/>
</dbReference>
<dbReference type="PRINTS" id="PR00298">
    <property type="entry name" value="CHAPERONIN60"/>
</dbReference>
<dbReference type="SUPFAM" id="SSF52029">
    <property type="entry name" value="GroEL apical domain-like"/>
    <property type="match status" value="1"/>
</dbReference>
<dbReference type="SUPFAM" id="SSF48592">
    <property type="entry name" value="GroEL equatorial domain-like"/>
    <property type="match status" value="1"/>
</dbReference>
<dbReference type="SUPFAM" id="SSF54849">
    <property type="entry name" value="GroEL-intermediate domain like"/>
    <property type="match status" value="1"/>
</dbReference>
<dbReference type="PROSITE" id="PS00296">
    <property type="entry name" value="CHAPERONINS_CPN60"/>
    <property type="match status" value="1"/>
</dbReference>
<keyword id="KW-0067">ATP-binding</keyword>
<keyword id="KW-0143">Chaperone</keyword>
<keyword id="KW-0963">Cytoplasm</keyword>
<keyword id="KW-0413">Isomerase</keyword>
<keyword id="KW-0547">Nucleotide-binding</keyword>
<keyword id="KW-1185">Reference proteome</keyword>
<accession>Q0VRW6</accession>
<feature type="chain" id="PRO_0000256867" description="Chaperonin GroEL">
    <location>
        <begin position="1"/>
        <end position="548"/>
    </location>
</feature>
<feature type="binding site" evidence="1">
    <location>
        <begin position="29"/>
        <end position="32"/>
    </location>
    <ligand>
        <name>ATP</name>
        <dbReference type="ChEBI" id="CHEBI:30616"/>
    </ligand>
</feature>
<feature type="binding site" evidence="1">
    <location>
        <position position="50"/>
    </location>
    <ligand>
        <name>ATP</name>
        <dbReference type="ChEBI" id="CHEBI:30616"/>
    </ligand>
</feature>
<feature type="binding site" evidence="1">
    <location>
        <begin position="86"/>
        <end position="90"/>
    </location>
    <ligand>
        <name>ATP</name>
        <dbReference type="ChEBI" id="CHEBI:30616"/>
    </ligand>
</feature>
<feature type="binding site" evidence="1">
    <location>
        <position position="414"/>
    </location>
    <ligand>
        <name>ATP</name>
        <dbReference type="ChEBI" id="CHEBI:30616"/>
    </ligand>
</feature>
<feature type="binding site" evidence="1">
    <location>
        <begin position="478"/>
        <end position="480"/>
    </location>
    <ligand>
        <name>ATP</name>
        <dbReference type="ChEBI" id="CHEBI:30616"/>
    </ligand>
</feature>
<feature type="binding site" evidence="1">
    <location>
        <position position="494"/>
    </location>
    <ligand>
        <name>ATP</name>
        <dbReference type="ChEBI" id="CHEBI:30616"/>
    </ligand>
</feature>
<reference key="1">
    <citation type="journal article" date="2006" name="Nat. Biotechnol.">
        <title>Genome sequence of the ubiquitous hydrocarbon-degrading marine bacterium Alcanivorax borkumensis.</title>
        <authorList>
            <person name="Schneiker S."/>
            <person name="Martins dos Santos V.A.P."/>
            <person name="Bartels D."/>
            <person name="Bekel T."/>
            <person name="Brecht M."/>
            <person name="Buhrmester J."/>
            <person name="Chernikova T.N."/>
            <person name="Denaro R."/>
            <person name="Ferrer M."/>
            <person name="Gertler C."/>
            <person name="Goesmann A."/>
            <person name="Golyshina O.V."/>
            <person name="Kaminski F."/>
            <person name="Khachane A.N."/>
            <person name="Lang S."/>
            <person name="Linke B."/>
            <person name="McHardy A.C."/>
            <person name="Meyer F."/>
            <person name="Nechitaylo T."/>
            <person name="Puehler A."/>
            <person name="Regenhardt D."/>
            <person name="Rupp O."/>
            <person name="Sabirova J.S."/>
            <person name="Selbitschka W."/>
            <person name="Yakimov M.M."/>
            <person name="Timmis K.N."/>
            <person name="Vorhoelter F.-J."/>
            <person name="Weidner S."/>
            <person name="Kaiser O."/>
            <person name="Golyshin P.N."/>
        </authorList>
    </citation>
    <scope>NUCLEOTIDE SEQUENCE [LARGE SCALE GENOMIC DNA]</scope>
    <source>
        <strain>ATCC 700651 / DSM 11573 / NCIMB 13689 / SK2</strain>
    </source>
</reference>
<comment type="function">
    <text evidence="1">Together with its co-chaperonin GroES, plays an essential role in assisting protein folding. The GroEL-GroES system forms a nano-cage that allows encapsulation of the non-native substrate proteins and provides a physical environment optimized to promote and accelerate protein folding.</text>
</comment>
<comment type="catalytic activity">
    <reaction evidence="1">
        <text>ATP + H2O + a folded polypeptide = ADP + phosphate + an unfolded polypeptide.</text>
        <dbReference type="EC" id="5.6.1.7"/>
    </reaction>
</comment>
<comment type="subunit">
    <text evidence="1">Forms a cylinder of 14 subunits composed of two heptameric rings stacked back-to-back. Interacts with the co-chaperonin GroES.</text>
</comment>
<comment type="subcellular location">
    <subcellularLocation>
        <location evidence="1">Cytoplasm</location>
    </subcellularLocation>
</comment>
<comment type="similarity">
    <text evidence="1">Belongs to the chaperonin (HSP60) family.</text>
</comment>
<sequence>MAKEILFRDEARQRMAKGVNILADAVKVTLGPKGRNVVLEKSFGAPSITKDGVSVAREIELEDKFENMGAQMVKEVASKANDEAGDGTTTATVLAQAFVNEGLKSVTAGMNPMDLKRGIDQAVAAVVEELKKLSTPCDNTKSIEQVGTISANADKSVGEIIAQAMEKVGQEGVITVEEGQSLQNELDVVEGMQFDRGYLSPYFINNQEKMQVELEDPYILLVDKKISNIRELLPALENVAKAGKPLLIIAEDIEGEALATLVVNNMRGIIKCAAVKAPGFGDRRKAMLQDIAILTGGTVISEEVGLSLENASLEDLGTAKKVNIDKENTTIVDGAGQQADIDGRVEQIRKEIENSSSDYDKEKLQERVAKLAGGVAVIKIGAATEIEMKEKKARVDDALHATRAAVEEGVVPGGGVALVRALANVGTIKGDNDEQNAGIALTFRALEMPLRQIAYNAGAEASVIVQEVRNGKGNYGYNAASGEYGDMLEMGILDPAKVTRSALQAAASIAGLMITTEAMVADKPEENAGAGAPDMGGMGGMGGMGGMM</sequence>
<gene>
    <name evidence="1" type="primary">groEL</name>
    <name evidence="1" type="synonym">groL</name>
    <name type="ordered locus">ABO_0634</name>
</gene>
<organism>
    <name type="scientific">Alcanivorax borkumensis (strain ATCC 700651 / DSM 11573 / NCIMB 13689 / SK2)</name>
    <dbReference type="NCBI Taxonomy" id="393595"/>
    <lineage>
        <taxon>Bacteria</taxon>
        <taxon>Pseudomonadati</taxon>
        <taxon>Pseudomonadota</taxon>
        <taxon>Gammaproteobacteria</taxon>
        <taxon>Oceanospirillales</taxon>
        <taxon>Alcanivoracaceae</taxon>
        <taxon>Alcanivorax</taxon>
    </lineage>
</organism>
<proteinExistence type="inferred from homology"/>
<evidence type="ECO:0000255" key="1">
    <source>
        <dbReference type="HAMAP-Rule" id="MF_00600"/>
    </source>
</evidence>
<protein>
    <recommendedName>
        <fullName evidence="1">Chaperonin GroEL</fullName>
        <ecNumber evidence="1">5.6.1.7</ecNumber>
    </recommendedName>
    <alternativeName>
        <fullName evidence="1">60 kDa chaperonin</fullName>
    </alternativeName>
    <alternativeName>
        <fullName evidence="1">Chaperonin-60</fullName>
        <shortName evidence="1">Cpn60</shortName>
    </alternativeName>
</protein>